<sequence>MTDDSNKTTHFGFETVPEGEKAGRVQGVFSSVASKYDIMNDVMSVGIHRLWKEAMMDWLAPRAGQKLLDVAGGTGDISFRFLKRAGYGHATVLDLTESMLVEGRKRAEAAAMADQLDWVTGDAMALPFADNTFDVYTISFGIRNVTRPQEALNEAFRVLRPGGRLMVLEFSQLPNPAMQKAYDLYSFNVIPRMGQAIAGDRDSYQYLVESIRKFPDQDTFLKMVRDAGFENAKFRNLSMGIACLHSGWKL</sequence>
<protein>
    <recommendedName>
        <fullName evidence="1">Ubiquinone/menaquinone biosynthesis C-methyltransferase UbiE</fullName>
        <ecNumber evidence="1">2.1.1.163</ecNumber>
        <ecNumber evidence="1">2.1.1.201</ecNumber>
    </recommendedName>
    <alternativeName>
        <fullName evidence="1">2-methoxy-6-polyprenyl-1,4-benzoquinol methylase</fullName>
    </alternativeName>
    <alternativeName>
        <fullName evidence="1">Demethylmenaquinone methyltransferase</fullName>
    </alternativeName>
</protein>
<reference key="1">
    <citation type="journal article" date="2007" name="J. Bacteriol.">
        <title>The complete genome sequence of Roseobacter denitrificans reveals a mixotrophic rather than photosynthetic metabolism.</title>
        <authorList>
            <person name="Swingley W.D."/>
            <person name="Sadekar S."/>
            <person name="Mastrian S.D."/>
            <person name="Matthies H.J."/>
            <person name="Hao J."/>
            <person name="Ramos H."/>
            <person name="Acharya C.R."/>
            <person name="Conrad A.L."/>
            <person name="Taylor H.L."/>
            <person name="Dejesa L.C."/>
            <person name="Shah M.K."/>
            <person name="O'Huallachain M.E."/>
            <person name="Lince M.T."/>
            <person name="Blankenship R.E."/>
            <person name="Beatty J.T."/>
            <person name="Touchman J.W."/>
        </authorList>
    </citation>
    <scope>NUCLEOTIDE SEQUENCE [LARGE SCALE GENOMIC DNA]</scope>
    <source>
        <strain>ATCC 33942 / OCh 114</strain>
    </source>
</reference>
<comment type="function">
    <text evidence="1">Methyltransferase required for the conversion of demethylmenaquinol (DMKH2) to menaquinol (MKH2) and the conversion of 2-polyprenyl-6-methoxy-1,4-benzoquinol (DDMQH2) to 2-polyprenyl-3-methyl-6-methoxy-1,4-benzoquinol (DMQH2).</text>
</comment>
<comment type="catalytic activity">
    <reaction evidence="1">
        <text>a 2-demethylmenaquinol + S-adenosyl-L-methionine = a menaquinol + S-adenosyl-L-homocysteine + H(+)</text>
        <dbReference type="Rhea" id="RHEA:42640"/>
        <dbReference type="Rhea" id="RHEA-COMP:9539"/>
        <dbReference type="Rhea" id="RHEA-COMP:9563"/>
        <dbReference type="ChEBI" id="CHEBI:15378"/>
        <dbReference type="ChEBI" id="CHEBI:18151"/>
        <dbReference type="ChEBI" id="CHEBI:55437"/>
        <dbReference type="ChEBI" id="CHEBI:57856"/>
        <dbReference type="ChEBI" id="CHEBI:59789"/>
        <dbReference type="EC" id="2.1.1.163"/>
    </reaction>
</comment>
<comment type="catalytic activity">
    <reaction evidence="1">
        <text>a 2-methoxy-6-(all-trans-polyprenyl)benzene-1,4-diol + S-adenosyl-L-methionine = a 5-methoxy-2-methyl-3-(all-trans-polyprenyl)benzene-1,4-diol + S-adenosyl-L-homocysteine + H(+)</text>
        <dbReference type="Rhea" id="RHEA:28286"/>
        <dbReference type="Rhea" id="RHEA-COMP:10858"/>
        <dbReference type="Rhea" id="RHEA-COMP:10859"/>
        <dbReference type="ChEBI" id="CHEBI:15378"/>
        <dbReference type="ChEBI" id="CHEBI:57856"/>
        <dbReference type="ChEBI" id="CHEBI:59789"/>
        <dbReference type="ChEBI" id="CHEBI:84166"/>
        <dbReference type="ChEBI" id="CHEBI:84167"/>
        <dbReference type="EC" id="2.1.1.201"/>
    </reaction>
</comment>
<comment type="pathway">
    <text evidence="1">Quinol/quinone metabolism; menaquinone biosynthesis; menaquinol from 1,4-dihydroxy-2-naphthoate: step 2/2.</text>
</comment>
<comment type="pathway">
    <text evidence="1">Cofactor biosynthesis; ubiquinone biosynthesis.</text>
</comment>
<comment type="similarity">
    <text evidence="1">Belongs to the class I-like SAM-binding methyltransferase superfamily. MenG/UbiE family.</text>
</comment>
<proteinExistence type="inferred from homology"/>
<keyword id="KW-0474">Menaquinone biosynthesis</keyword>
<keyword id="KW-0489">Methyltransferase</keyword>
<keyword id="KW-1185">Reference proteome</keyword>
<keyword id="KW-0949">S-adenosyl-L-methionine</keyword>
<keyword id="KW-0808">Transferase</keyword>
<keyword id="KW-0831">Ubiquinone biosynthesis</keyword>
<gene>
    <name evidence="1" type="primary">ubiE</name>
    <name type="ordered locus">RD1_0203</name>
</gene>
<feature type="chain" id="PRO_1000187800" description="Ubiquinone/menaquinone biosynthesis C-methyltransferase UbiE">
    <location>
        <begin position="1"/>
        <end position="250"/>
    </location>
</feature>
<feature type="binding site" evidence="1">
    <location>
        <position position="74"/>
    </location>
    <ligand>
        <name>S-adenosyl-L-methionine</name>
        <dbReference type="ChEBI" id="CHEBI:59789"/>
    </ligand>
</feature>
<feature type="binding site" evidence="1">
    <location>
        <position position="94"/>
    </location>
    <ligand>
        <name>S-adenosyl-L-methionine</name>
        <dbReference type="ChEBI" id="CHEBI:59789"/>
    </ligand>
</feature>
<feature type="binding site" evidence="1">
    <location>
        <begin position="122"/>
        <end position="123"/>
    </location>
    <ligand>
        <name>S-adenosyl-L-methionine</name>
        <dbReference type="ChEBI" id="CHEBI:59789"/>
    </ligand>
</feature>
<feature type="binding site" evidence="1">
    <location>
        <position position="139"/>
    </location>
    <ligand>
        <name>S-adenosyl-L-methionine</name>
        <dbReference type="ChEBI" id="CHEBI:59789"/>
    </ligand>
</feature>
<organism>
    <name type="scientific">Roseobacter denitrificans (strain ATCC 33942 / OCh 114)</name>
    <name type="common">Erythrobacter sp. (strain OCh 114)</name>
    <name type="synonym">Roseobacter denitrificans</name>
    <dbReference type="NCBI Taxonomy" id="375451"/>
    <lineage>
        <taxon>Bacteria</taxon>
        <taxon>Pseudomonadati</taxon>
        <taxon>Pseudomonadota</taxon>
        <taxon>Alphaproteobacteria</taxon>
        <taxon>Rhodobacterales</taxon>
        <taxon>Roseobacteraceae</taxon>
        <taxon>Roseobacter</taxon>
    </lineage>
</organism>
<accession>Q16DL1</accession>
<dbReference type="EC" id="2.1.1.163" evidence="1"/>
<dbReference type="EC" id="2.1.1.201" evidence="1"/>
<dbReference type="EMBL" id="CP000362">
    <property type="protein sequence ID" value="ABG29932.1"/>
    <property type="molecule type" value="Genomic_DNA"/>
</dbReference>
<dbReference type="RefSeq" id="WP_011566554.1">
    <property type="nucleotide sequence ID" value="NC_008209.1"/>
</dbReference>
<dbReference type="SMR" id="Q16DL1"/>
<dbReference type="STRING" id="375451.RD1_0203"/>
<dbReference type="KEGG" id="rde:RD1_0203"/>
<dbReference type="eggNOG" id="COG2226">
    <property type="taxonomic scope" value="Bacteria"/>
</dbReference>
<dbReference type="HOGENOM" id="CLU_037990_0_0_5"/>
<dbReference type="OrthoDB" id="9808140at2"/>
<dbReference type="UniPathway" id="UPA00079">
    <property type="reaction ID" value="UER00169"/>
</dbReference>
<dbReference type="UniPathway" id="UPA00232"/>
<dbReference type="Proteomes" id="UP000007029">
    <property type="component" value="Chromosome"/>
</dbReference>
<dbReference type="GO" id="GO:0008425">
    <property type="term" value="F:2-methoxy-6-polyprenyl-1,4-benzoquinol methyltransferase activity"/>
    <property type="evidence" value="ECO:0007669"/>
    <property type="project" value="UniProtKB-UniRule"/>
</dbReference>
<dbReference type="GO" id="GO:0043770">
    <property type="term" value="F:demethylmenaquinone methyltransferase activity"/>
    <property type="evidence" value="ECO:0007669"/>
    <property type="project" value="UniProtKB-UniRule"/>
</dbReference>
<dbReference type="GO" id="GO:0009060">
    <property type="term" value="P:aerobic respiration"/>
    <property type="evidence" value="ECO:0007669"/>
    <property type="project" value="UniProtKB-UniRule"/>
</dbReference>
<dbReference type="GO" id="GO:0009234">
    <property type="term" value="P:menaquinone biosynthetic process"/>
    <property type="evidence" value="ECO:0007669"/>
    <property type="project" value="UniProtKB-UniRule"/>
</dbReference>
<dbReference type="GO" id="GO:0032259">
    <property type="term" value="P:methylation"/>
    <property type="evidence" value="ECO:0007669"/>
    <property type="project" value="UniProtKB-KW"/>
</dbReference>
<dbReference type="CDD" id="cd02440">
    <property type="entry name" value="AdoMet_MTases"/>
    <property type="match status" value="1"/>
</dbReference>
<dbReference type="Gene3D" id="3.40.50.150">
    <property type="entry name" value="Vaccinia Virus protein VP39"/>
    <property type="match status" value="1"/>
</dbReference>
<dbReference type="HAMAP" id="MF_01813">
    <property type="entry name" value="MenG_UbiE_methyltr"/>
    <property type="match status" value="1"/>
</dbReference>
<dbReference type="InterPro" id="IPR029063">
    <property type="entry name" value="SAM-dependent_MTases_sf"/>
</dbReference>
<dbReference type="InterPro" id="IPR004033">
    <property type="entry name" value="UbiE/COQ5_MeTrFase"/>
</dbReference>
<dbReference type="InterPro" id="IPR023576">
    <property type="entry name" value="UbiE/COQ5_MeTrFase_CS"/>
</dbReference>
<dbReference type="NCBIfam" id="TIGR01934">
    <property type="entry name" value="MenG_MenH_UbiE"/>
    <property type="match status" value="1"/>
</dbReference>
<dbReference type="NCBIfam" id="NF001242">
    <property type="entry name" value="PRK00216.1-3"/>
    <property type="match status" value="1"/>
</dbReference>
<dbReference type="NCBIfam" id="NF001244">
    <property type="entry name" value="PRK00216.1-5"/>
    <property type="match status" value="1"/>
</dbReference>
<dbReference type="PANTHER" id="PTHR43591:SF24">
    <property type="entry name" value="2-METHOXY-6-POLYPRENYL-1,4-BENZOQUINOL METHYLASE, MITOCHONDRIAL"/>
    <property type="match status" value="1"/>
</dbReference>
<dbReference type="PANTHER" id="PTHR43591">
    <property type="entry name" value="METHYLTRANSFERASE"/>
    <property type="match status" value="1"/>
</dbReference>
<dbReference type="Pfam" id="PF01209">
    <property type="entry name" value="Ubie_methyltran"/>
    <property type="match status" value="1"/>
</dbReference>
<dbReference type="SUPFAM" id="SSF53335">
    <property type="entry name" value="S-adenosyl-L-methionine-dependent methyltransferases"/>
    <property type="match status" value="1"/>
</dbReference>
<dbReference type="PROSITE" id="PS51608">
    <property type="entry name" value="SAM_MT_UBIE"/>
    <property type="match status" value="1"/>
</dbReference>
<dbReference type="PROSITE" id="PS01183">
    <property type="entry name" value="UBIE_1"/>
    <property type="match status" value="1"/>
</dbReference>
<dbReference type="PROSITE" id="PS01184">
    <property type="entry name" value="UBIE_2"/>
    <property type="match status" value="1"/>
</dbReference>
<evidence type="ECO:0000255" key="1">
    <source>
        <dbReference type="HAMAP-Rule" id="MF_01813"/>
    </source>
</evidence>
<name>UBIE_ROSDO</name>